<protein>
    <recommendedName>
        <fullName>Major prion protein</fullName>
        <shortName>PrP</shortName>
    </recommendedName>
    <alternativeName>
        <fullName>PrP27-30</fullName>
    </alternativeName>
    <alternativeName>
        <fullName>PrP33-35C</fullName>
    </alternativeName>
    <cdAntigenName>CD230</cdAntigenName>
</protein>
<accession>P67996</accession>
<accession>P40254</accession>
<feature type="signal peptide" evidence="1">
    <location>
        <begin position="1"/>
        <end position="22"/>
    </location>
</feature>
<feature type="chain" id="PRO_0000025713" description="Major prion protein">
    <location>
        <begin position="23"/>
        <end position="230"/>
    </location>
</feature>
<feature type="propeptide" id="PRO_0000025714" description="Removed in mature form" evidence="1">
    <location>
        <begin position="231"/>
        <end position="253"/>
    </location>
</feature>
<feature type="repeat" description="1">
    <location>
        <begin position="51"/>
        <end position="59"/>
    </location>
</feature>
<feature type="repeat" description="2">
    <location>
        <begin position="60"/>
        <end position="67"/>
    </location>
</feature>
<feature type="repeat" description="3">
    <location>
        <begin position="68"/>
        <end position="75"/>
    </location>
</feature>
<feature type="repeat" description="4">
    <location>
        <begin position="76"/>
        <end position="83"/>
    </location>
</feature>
<feature type="repeat" description="5">
    <location>
        <begin position="84"/>
        <end position="91"/>
    </location>
</feature>
<feature type="region of interest" description="Interaction with GRB2, ERI3 and SYN1" evidence="4">
    <location>
        <begin position="23"/>
        <end position="230"/>
    </location>
</feature>
<feature type="region of interest" description="Disordered" evidence="6">
    <location>
        <begin position="26"/>
        <end position="108"/>
    </location>
</feature>
<feature type="region of interest" description="5 X 8 AA tandem repeats of P-H-G-G-G-W-G-Q">
    <location>
        <begin position="51"/>
        <end position="91"/>
    </location>
</feature>
<feature type="compositionally biased region" description="Gly residues" evidence="6">
    <location>
        <begin position="52"/>
        <end position="95"/>
    </location>
</feature>
<feature type="compositionally biased region" description="Basic residues" evidence="6">
    <location>
        <begin position="98"/>
        <end position="108"/>
    </location>
</feature>
<feature type="binding site" evidence="2">
    <location>
        <position position="61"/>
    </location>
    <ligand>
        <name>Cu(2+)</name>
        <dbReference type="ChEBI" id="CHEBI:29036"/>
        <label>1</label>
    </ligand>
</feature>
<feature type="binding site" evidence="2">
    <location>
        <position position="62"/>
    </location>
    <ligand>
        <name>Cu(2+)</name>
        <dbReference type="ChEBI" id="CHEBI:29036"/>
        <label>1</label>
    </ligand>
</feature>
<feature type="binding site" evidence="2">
    <location>
        <position position="63"/>
    </location>
    <ligand>
        <name>Cu(2+)</name>
        <dbReference type="ChEBI" id="CHEBI:29036"/>
        <label>1</label>
    </ligand>
</feature>
<feature type="binding site" evidence="2">
    <location>
        <position position="69"/>
    </location>
    <ligand>
        <name>Cu(2+)</name>
        <dbReference type="ChEBI" id="CHEBI:29036"/>
        <label>2</label>
    </ligand>
</feature>
<feature type="binding site" evidence="2">
    <location>
        <position position="70"/>
    </location>
    <ligand>
        <name>Cu(2+)</name>
        <dbReference type="ChEBI" id="CHEBI:29036"/>
        <label>2</label>
    </ligand>
</feature>
<feature type="binding site" evidence="2">
    <location>
        <position position="71"/>
    </location>
    <ligand>
        <name>Cu(2+)</name>
        <dbReference type="ChEBI" id="CHEBI:29036"/>
        <label>2</label>
    </ligand>
</feature>
<feature type="binding site" evidence="2">
    <location>
        <position position="77"/>
    </location>
    <ligand>
        <name>Cu(2+)</name>
        <dbReference type="ChEBI" id="CHEBI:29036"/>
        <label>3</label>
    </ligand>
</feature>
<feature type="binding site" evidence="2">
    <location>
        <position position="78"/>
    </location>
    <ligand>
        <name>Cu(2+)</name>
        <dbReference type="ChEBI" id="CHEBI:29036"/>
        <label>3</label>
    </ligand>
</feature>
<feature type="binding site" evidence="2">
    <location>
        <position position="79"/>
    </location>
    <ligand>
        <name>Cu(2+)</name>
        <dbReference type="ChEBI" id="CHEBI:29036"/>
        <label>3</label>
    </ligand>
</feature>
<feature type="binding site" evidence="2">
    <location>
        <position position="85"/>
    </location>
    <ligand>
        <name>Cu(2+)</name>
        <dbReference type="ChEBI" id="CHEBI:29036"/>
        <label>4</label>
    </ligand>
</feature>
<feature type="binding site" evidence="2">
    <location>
        <position position="86"/>
    </location>
    <ligand>
        <name>Cu(2+)</name>
        <dbReference type="ChEBI" id="CHEBI:29036"/>
        <label>4</label>
    </ligand>
</feature>
<feature type="binding site" evidence="2">
    <location>
        <position position="87"/>
    </location>
    <ligand>
        <name>Cu(2+)</name>
        <dbReference type="ChEBI" id="CHEBI:29036"/>
        <label>4</label>
    </ligand>
</feature>
<feature type="lipid moiety-binding region" description="GPI-anchor amidated serine" evidence="3">
    <location>
        <position position="230"/>
    </location>
</feature>
<feature type="glycosylation site" description="N-linked (GlcNAc...) asparagine" evidence="5">
    <location>
        <position position="181"/>
    </location>
</feature>
<feature type="glycosylation site" description="N-linked (GlcNAc...) asparagine" evidence="5">
    <location>
        <position position="197"/>
    </location>
</feature>
<feature type="disulfide bond" evidence="3">
    <location>
        <begin position="179"/>
        <end position="214"/>
    </location>
</feature>
<keyword id="KW-0034">Amyloid</keyword>
<keyword id="KW-1003">Cell membrane</keyword>
<keyword id="KW-0186">Copper</keyword>
<keyword id="KW-1015">Disulfide bond</keyword>
<keyword id="KW-0325">Glycoprotein</keyword>
<keyword id="KW-0333">Golgi apparatus</keyword>
<keyword id="KW-0336">GPI-anchor</keyword>
<keyword id="KW-0449">Lipoprotein</keyword>
<keyword id="KW-0472">Membrane</keyword>
<keyword id="KW-0479">Metal-binding</keyword>
<keyword id="KW-0640">Prion</keyword>
<keyword id="KW-0677">Repeat</keyword>
<keyword id="KW-0732">Signal</keyword>
<keyword id="KW-0862">Zinc</keyword>
<comment type="function">
    <text evidence="2 4">Its primary physiological function is unclear. Has cytoprotective activity against internal or environmental stresses. May play a role in neuronal development and synaptic plasticity. May be required for neuronal myelin sheath maintenance. May play a role in iron uptake and iron homeostasis. Soluble oligomers are toxic to cultured neuroblastoma cells and induce apoptosis (in vitro). Association with GPC1 (via its heparan sulfate chains) targets PRNP to lipid rafts. Also provides Cu(2+) or Zn(2+) for the ascorbate-mediated GPC1 deaminase degradation of its heparan sulfate side chains (By similarity).</text>
</comment>
<comment type="subunit">
    <text evidence="2 4">Monomer and homodimer. Has a tendency to aggregate into amyloid fibrils containing a cross-beta spine, formed by a steric zipper of superposed beta-strands. Soluble oligomers may represent an intermediate stage on the path to fibril formation. Copper binding may promote oligomerization. Interacts with GRB2, APP, ERI3/PRNPIP and SYN1. Mislocalized cytosolically exposed PrP interacts with MGRN1; this interaction alters MGRN1 subcellular location and causes lysosomal enlargement. Interacts with KIAA1191.</text>
</comment>
<comment type="subcellular location">
    <subcellularLocation>
        <location evidence="2">Cell membrane</location>
        <topology evidence="2">Lipid-anchor</topology>
        <topology evidence="2">GPI-anchor</topology>
    </subcellularLocation>
    <subcellularLocation>
        <location evidence="4">Golgi apparatus</location>
    </subcellularLocation>
    <text evidence="2">Targeted to lipid rafts via association with the heparan sulfate chains of GPC1. Colocates, in the presence of Cu(2+), to vesicles in para- and perinuclear regions, where both proteins undergo internalization. Heparin displaces PRNP from lipid rafts and promotes endocytosis.</text>
</comment>
<comment type="domain">
    <text evidence="2">The normal, monomeric form has a mainly alpha-helical structure. The disease-associated, protease-resistant form forms amyloid fibrils containing a cross-beta spine, formed by a steric zipper of superposed beta-strands. Disease mutations may favor intermolecular contacts via short beta strands, and may thereby trigger oligomerization.</text>
</comment>
<comment type="domain">
    <text evidence="2">Contains an N-terminal region composed of octamer repeats. At low copper concentrations, the sidechains of His residues from three or four repeats contribute to the binding of a single copper ion. Alternatively, a copper ion can be bound by interaction with the sidechain and backbone amide nitrogen of a single His residue. The observed copper binding stoichiometry suggests that two repeat regions cooperate to stabilize the binding of a single copper ion. At higher copper concentrations, each octamer can bind one copper ion by interactions with the His sidechain and Gly backbone atoms. A mixture of binding types may occur, especially in the case of octamer repeat expansion. Copper binding may stabilize the conformation of this region and may promote oligomerization.</text>
</comment>
<comment type="disease">
    <text evidence="7">PrP is found in high quantity in the brain of humans and animals infected with the degenerative neurological diseases kuru, Creutzfeldt-Jakob disease (CJD), Gerstmann-Straussler syndrome (GSS), scrapie, bovine spongiform encephalopathy (BSE), transmissible mink encephalopathy (TME), etc.</text>
</comment>
<comment type="similarity">
    <text evidence="7">Belongs to the prion family.</text>
</comment>
<name>PRIO_PAPHA</name>
<dbReference type="EMBL" id="U08294">
    <property type="protein sequence ID" value="AAC50083.1"/>
    <property type="molecule type" value="Genomic_DNA"/>
</dbReference>
<dbReference type="PIR" id="S53620">
    <property type="entry name" value="S53620"/>
</dbReference>
<dbReference type="SMR" id="P67996"/>
<dbReference type="GlyCosmos" id="P67996">
    <property type="glycosylation" value="2 sites, No reported glycans"/>
</dbReference>
<dbReference type="GO" id="GO:0005794">
    <property type="term" value="C:Golgi apparatus"/>
    <property type="evidence" value="ECO:0007669"/>
    <property type="project" value="UniProtKB-SubCell"/>
</dbReference>
<dbReference type="GO" id="GO:0005886">
    <property type="term" value="C:plasma membrane"/>
    <property type="evidence" value="ECO:0007669"/>
    <property type="project" value="UniProtKB-SubCell"/>
</dbReference>
<dbReference type="GO" id="GO:0098552">
    <property type="term" value="C:side of membrane"/>
    <property type="evidence" value="ECO:0007669"/>
    <property type="project" value="UniProtKB-KW"/>
</dbReference>
<dbReference type="GO" id="GO:0005507">
    <property type="term" value="F:copper ion binding"/>
    <property type="evidence" value="ECO:0000250"/>
    <property type="project" value="UniProtKB"/>
</dbReference>
<dbReference type="GO" id="GO:0051260">
    <property type="term" value="P:protein homooligomerization"/>
    <property type="evidence" value="ECO:0007669"/>
    <property type="project" value="InterPro"/>
</dbReference>
<dbReference type="FunFam" id="1.10.790.10:FF:000001">
    <property type="entry name" value="Major prion protein"/>
    <property type="match status" value="1"/>
</dbReference>
<dbReference type="Gene3D" id="1.10.790.10">
    <property type="entry name" value="Prion/Doppel protein, beta-ribbon domain"/>
    <property type="match status" value="1"/>
</dbReference>
<dbReference type="InterPro" id="IPR000817">
    <property type="entry name" value="Prion"/>
</dbReference>
<dbReference type="InterPro" id="IPR036924">
    <property type="entry name" value="Prion/Doppel_b-ribbon_dom_sf"/>
</dbReference>
<dbReference type="InterPro" id="IPR022416">
    <property type="entry name" value="Prion/Doppel_prot_b-ribbon_dom"/>
</dbReference>
<dbReference type="InterPro" id="IPR020949">
    <property type="entry name" value="Prion_copper_b_octapeptide"/>
</dbReference>
<dbReference type="InterPro" id="IPR025860">
    <property type="entry name" value="Prion_N"/>
</dbReference>
<dbReference type="PANTHER" id="PTHR15506">
    <property type="entry name" value="DOPPEL PRION"/>
    <property type="match status" value="1"/>
</dbReference>
<dbReference type="PANTHER" id="PTHR15506:SF2">
    <property type="entry name" value="MAJOR PRION PROTEIN"/>
    <property type="match status" value="1"/>
</dbReference>
<dbReference type="Pfam" id="PF00377">
    <property type="entry name" value="Prion"/>
    <property type="match status" value="1"/>
</dbReference>
<dbReference type="Pfam" id="PF11587">
    <property type="entry name" value="Prion_bPrPp"/>
    <property type="match status" value="1"/>
</dbReference>
<dbReference type="Pfam" id="PF03991">
    <property type="entry name" value="Prion_octapep"/>
    <property type="match status" value="1"/>
</dbReference>
<dbReference type="PRINTS" id="PR00341">
    <property type="entry name" value="PRION"/>
</dbReference>
<dbReference type="SMART" id="SM00157">
    <property type="entry name" value="PRP"/>
    <property type="match status" value="1"/>
</dbReference>
<dbReference type="SUPFAM" id="SSF54098">
    <property type="entry name" value="Prion-like"/>
    <property type="match status" value="1"/>
</dbReference>
<dbReference type="PROSITE" id="PS00291">
    <property type="entry name" value="PRION_1"/>
    <property type="match status" value="1"/>
</dbReference>
<dbReference type="PROSITE" id="PS00706">
    <property type="entry name" value="PRION_2"/>
    <property type="match status" value="1"/>
</dbReference>
<gene>
    <name type="primary">PRNP</name>
    <name type="synonym">PRP</name>
</gene>
<proteinExistence type="inferred from homology"/>
<evidence type="ECO:0000250" key="1"/>
<evidence type="ECO:0000250" key="2">
    <source>
        <dbReference type="UniProtKB" id="P04156"/>
    </source>
</evidence>
<evidence type="ECO:0000250" key="3">
    <source>
        <dbReference type="UniProtKB" id="P04273"/>
    </source>
</evidence>
<evidence type="ECO:0000250" key="4">
    <source>
        <dbReference type="UniProtKB" id="P04925"/>
    </source>
</evidence>
<evidence type="ECO:0000255" key="5"/>
<evidence type="ECO:0000256" key="6">
    <source>
        <dbReference type="SAM" id="MobiDB-lite"/>
    </source>
</evidence>
<evidence type="ECO:0000305" key="7"/>
<sequence>MANLGCWMLVLFVATWSDLGLCKKRPKPGGWNTGGSRYPGQGSPGGNRYPPQGGGGWGQPHGGGWGQPHGGGWGQPHGGGWGQPHGGGWGQGGGTHNQWHKPSKPKTSMKHMAGAAAAGAVVGGLGGYMLGSAMSRPLIHFGNDYEDRYYRENMYRYPNQVYYRPVDQYSNQNNFVHDCVNITIKQHTVTTTTKGENFTETDVKMMERVVEQMCITQYEKESQAYYQRGSSMVLFSSPPVILLISFLIFLIVG</sequence>
<reference key="1">
    <citation type="journal article" date="1995" name="J. Mol. Biol.">
        <title>Prion protein gene variation among primates.</title>
        <authorList>
            <person name="Schaetzl H.M."/>
            <person name="Da Costa M."/>
            <person name="Taylor L."/>
            <person name="Cohen F.E."/>
            <person name="Prusiner S.B."/>
        </authorList>
    </citation>
    <scope>NUCLEOTIDE SEQUENCE [GENOMIC DNA]</scope>
</reference>
<reference key="2">
    <citation type="journal article" date="1997" name="J. Mol. Biol.">
        <authorList>
            <person name="Schaetzl H.M."/>
            <person name="Da Costa M."/>
            <person name="Taylor L."/>
            <person name="Cohen F.E."/>
            <person name="Prusiner S.B."/>
        </authorList>
    </citation>
    <scope>ERRATUM OF PUBMED:7837269</scope>
</reference>
<organism>
    <name type="scientific">Papio hamadryas</name>
    <name type="common">Hamadryas baboon</name>
    <dbReference type="NCBI Taxonomy" id="9557"/>
    <lineage>
        <taxon>Eukaryota</taxon>
        <taxon>Metazoa</taxon>
        <taxon>Chordata</taxon>
        <taxon>Craniata</taxon>
        <taxon>Vertebrata</taxon>
        <taxon>Euteleostomi</taxon>
        <taxon>Mammalia</taxon>
        <taxon>Eutheria</taxon>
        <taxon>Euarchontoglires</taxon>
        <taxon>Primates</taxon>
        <taxon>Haplorrhini</taxon>
        <taxon>Catarrhini</taxon>
        <taxon>Cercopithecidae</taxon>
        <taxon>Cercopithecinae</taxon>
        <taxon>Papio</taxon>
    </lineage>
</organism>